<dbReference type="EC" id="6.1.1.5" evidence="1"/>
<dbReference type="EMBL" id="CP000382">
    <property type="protein sequence ID" value="ABK60463.1"/>
    <property type="molecule type" value="Genomic_DNA"/>
</dbReference>
<dbReference type="RefSeq" id="WP_011723091.1">
    <property type="nucleotide sequence ID" value="NC_008593.1"/>
</dbReference>
<dbReference type="SMR" id="A0Q3B0"/>
<dbReference type="STRING" id="386415.NT01CX_0646"/>
<dbReference type="KEGG" id="cno:NT01CX_0646"/>
<dbReference type="eggNOG" id="COG0060">
    <property type="taxonomic scope" value="Bacteria"/>
</dbReference>
<dbReference type="HOGENOM" id="CLU_001493_1_1_9"/>
<dbReference type="Proteomes" id="UP000008220">
    <property type="component" value="Chromosome"/>
</dbReference>
<dbReference type="GO" id="GO:0005737">
    <property type="term" value="C:cytoplasm"/>
    <property type="evidence" value="ECO:0007669"/>
    <property type="project" value="UniProtKB-SubCell"/>
</dbReference>
<dbReference type="GO" id="GO:0002161">
    <property type="term" value="F:aminoacyl-tRNA deacylase activity"/>
    <property type="evidence" value="ECO:0007669"/>
    <property type="project" value="InterPro"/>
</dbReference>
<dbReference type="GO" id="GO:0005524">
    <property type="term" value="F:ATP binding"/>
    <property type="evidence" value="ECO:0007669"/>
    <property type="project" value="UniProtKB-UniRule"/>
</dbReference>
<dbReference type="GO" id="GO:0004822">
    <property type="term" value="F:isoleucine-tRNA ligase activity"/>
    <property type="evidence" value="ECO:0007669"/>
    <property type="project" value="UniProtKB-UniRule"/>
</dbReference>
<dbReference type="GO" id="GO:0000049">
    <property type="term" value="F:tRNA binding"/>
    <property type="evidence" value="ECO:0007669"/>
    <property type="project" value="InterPro"/>
</dbReference>
<dbReference type="GO" id="GO:0008270">
    <property type="term" value="F:zinc ion binding"/>
    <property type="evidence" value="ECO:0007669"/>
    <property type="project" value="UniProtKB-UniRule"/>
</dbReference>
<dbReference type="GO" id="GO:0006428">
    <property type="term" value="P:isoleucyl-tRNA aminoacylation"/>
    <property type="evidence" value="ECO:0007669"/>
    <property type="project" value="UniProtKB-UniRule"/>
</dbReference>
<dbReference type="CDD" id="cd07961">
    <property type="entry name" value="Anticodon_Ia_Ile_ABEc"/>
    <property type="match status" value="1"/>
</dbReference>
<dbReference type="CDD" id="cd00818">
    <property type="entry name" value="IleRS_core"/>
    <property type="match status" value="1"/>
</dbReference>
<dbReference type="FunFam" id="1.10.730.10:FF:000038">
    <property type="entry name" value="Isoleucine--tRNA ligase"/>
    <property type="match status" value="1"/>
</dbReference>
<dbReference type="FunFam" id="3.40.50.620:FF:000063">
    <property type="entry name" value="Isoleucine--tRNA ligase"/>
    <property type="match status" value="1"/>
</dbReference>
<dbReference type="FunFam" id="3.40.50.620:FF:000075">
    <property type="entry name" value="Isoleucine--tRNA ligase"/>
    <property type="match status" value="1"/>
</dbReference>
<dbReference type="Gene3D" id="3.40.50.620">
    <property type="entry name" value="HUPs"/>
    <property type="match status" value="2"/>
</dbReference>
<dbReference type="Gene3D" id="1.10.730.10">
    <property type="entry name" value="Isoleucyl-tRNA Synthetase, Domain 1"/>
    <property type="match status" value="1"/>
</dbReference>
<dbReference type="HAMAP" id="MF_02003">
    <property type="entry name" value="Ile_tRNA_synth_type2"/>
    <property type="match status" value="1"/>
</dbReference>
<dbReference type="InterPro" id="IPR001412">
    <property type="entry name" value="aa-tRNA-synth_I_CS"/>
</dbReference>
<dbReference type="InterPro" id="IPR002300">
    <property type="entry name" value="aa-tRNA-synth_Ia"/>
</dbReference>
<dbReference type="InterPro" id="IPR033709">
    <property type="entry name" value="Anticodon_Ile_ABEc"/>
</dbReference>
<dbReference type="InterPro" id="IPR002301">
    <property type="entry name" value="Ile-tRNA-ligase"/>
</dbReference>
<dbReference type="InterPro" id="IPR023586">
    <property type="entry name" value="Ile-tRNA-ligase_type2"/>
</dbReference>
<dbReference type="InterPro" id="IPR013155">
    <property type="entry name" value="M/V/L/I-tRNA-synth_anticd-bd"/>
</dbReference>
<dbReference type="InterPro" id="IPR014729">
    <property type="entry name" value="Rossmann-like_a/b/a_fold"/>
</dbReference>
<dbReference type="InterPro" id="IPR009080">
    <property type="entry name" value="tRNAsynth_Ia_anticodon-bd"/>
</dbReference>
<dbReference type="InterPro" id="IPR009008">
    <property type="entry name" value="Val/Leu/Ile-tRNA-synth_edit"/>
</dbReference>
<dbReference type="NCBIfam" id="TIGR00392">
    <property type="entry name" value="ileS"/>
    <property type="match status" value="1"/>
</dbReference>
<dbReference type="PANTHER" id="PTHR42780:SF1">
    <property type="entry name" value="ISOLEUCINE--TRNA LIGASE, CYTOPLASMIC"/>
    <property type="match status" value="1"/>
</dbReference>
<dbReference type="PANTHER" id="PTHR42780">
    <property type="entry name" value="SOLEUCYL-TRNA SYNTHETASE"/>
    <property type="match status" value="1"/>
</dbReference>
<dbReference type="Pfam" id="PF08264">
    <property type="entry name" value="Anticodon_1"/>
    <property type="match status" value="1"/>
</dbReference>
<dbReference type="Pfam" id="PF19302">
    <property type="entry name" value="DUF5915"/>
    <property type="match status" value="1"/>
</dbReference>
<dbReference type="Pfam" id="PF00133">
    <property type="entry name" value="tRNA-synt_1"/>
    <property type="match status" value="1"/>
</dbReference>
<dbReference type="PRINTS" id="PR00984">
    <property type="entry name" value="TRNASYNTHILE"/>
</dbReference>
<dbReference type="SUPFAM" id="SSF47323">
    <property type="entry name" value="Anticodon-binding domain of a subclass of class I aminoacyl-tRNA synthetases"/>
    <property type="match status" value="2"/>
</dbReference>
<dbReference type="SUPFAM" id="SSF52374">
    <property type="entry name" value="Nucleotidylyl transferase"/>
    <property type="match status" value="1"/>
</dbReference>
<dbReference type="SUPFAM" id="SSF50677">
    <property type="entry name" value="ValRS/IleRS/LeuRS editing domain"/>
    <property type="match status" value="1"/>
</dbReference>
<dbReference type="PROSITE" id="PS00178">
    <property type="entry name" value="AA_TRNA_LIGASE_I"/>
    <property type="match status" value="1"/>
</dbReference>
<comment type="function">
    <text evidence="1">Catalyzes the attachment of isoleucine to tRNA(Ile). As IleRS can inadvertently accommodate and process structurally similar amino acids such as valine, to avoid such errors it has two additional distinct tRNA(Ile)-dependent editing activities. One activity is designated as 'pretransfer' editing and involves the hydrolysis of activated Val-AMP. The other activity is designated 'posttransfer' editing and involves deacylation of mischarged Val-tRNA(Ile).</text>
</comment>
<comment type="catalytic activity">
    <reaction evidence="1">
        <text>tRNA(Ile) + L-isoleucine + ATP = L-isoleucyl-tRNA(Ile) + AMP + diphosphate</text>
        <dbReference type="Rhea" id="RHEA:11060"/>
        <dbReference type="Rhea" id="RHEA-COMP:9666"/>
        <dbReference type="Rhea" id="RHEA-COMP:9695"/>
        <dbReference type="ChEBI" id="CHEBI:30616"/>
        <dbReference type="ChEBI" id="CHEBI:33019"/>
        <dbReference type="ChEBI" id="CHEBI:58045"/>
        <dbReference type="ChEBI" id="CHEBI:78442"/>
        <dbReference type="ChEBI" id="CHEBI:78528"/>
        <dbReference type="ChEBI" id="CHEBI:456215"/>
        <dbReference type="EC" id="6.1.1.5"/>
    </reaction>
</comment>
<comment type="cofactor">
    <cofactor evidence="1">
        <name>Zn(2+)</name>
        <dbReference type="ChEBI" id="CHEBI:29105"/>
    </cofactor>
</comment>
<comment type="subunit">
    <text evidence="1">Monomer.</text>
</comment>
<comment type="subcellular location">
    <subcellularLocation>
        <location evidence="1">Cytoplasm</location>
    </subcellularLocation>
</comment>
<comment type="domain">
    <text evidence="1">IleRS has two distinct active sites: one for aminoacylation and one for editing. The misactivated valine is translocated from the active site to the editing site, which sterically excludes the correctly activated isoleucine. The single editing site contains two valyl binding pockets, one specific for each substrate (Val-AMP or Val-tRNA(Ile)).</text>
</comment>
<comment type="similarity">
    <text evidence="1">Belongs to the class-I aminoacyl-tRNA synthetase family. IleS type 2 subfamily.</text>
</comment>
<feature type="chain" id="PRO_1000070894" description="Isoleucine--tRNA ligase">
    <location>
        <begin position="1"/>
        <end position="1038"/>
    </location>
</feature>
<feature type="short sequence motif" description="'HIGH' region">
    <location>
        <begin position="48"/>
        <end position="58"/>
    </location>
</feature>
<feature type="short sequence motif" description="'KMSKS' region">
    <location>
        <begin position="590"/>
        <end position="594"/>
    </location>
</feature>
<feature type="binding site" evidence="1">
    <location>
        <position position="593"/>
    </location>
    <ligand>
        <name>ATP</name>
        <dbReference type="ChEBI" id="CHEBI:30616"/>
    </ligand>
</feature>
<organism>
    <name type="scientific">Clostridium novyi (strain NT)</name>
    <dbReference type="NCBI Taxonomy" id="386415"/>
    <lineage>
        <taxon>Bacteria</taxon>
        <taxon>Bacillati</taxon>
        <taxon>Bacillota</taxon>
        <taxon>Clostridia</taxon>
        <taxon>Eubacteriales</taxon>
        <taxon>Clostridiaceae</taxon>
        <taxon>Clostridium</taxon>
    </lineage>
</organism>
<proteinExistence type="inferred from homology"/>
<name>SYI_CLONN</name>
<accession>A0Q3B0</accession>
<evidence type="ECO:0000255" key="1">
    <source>
        <dbReference type="HAMAP-Rule" id="MF_02003"/>
    </source>
</evidence>
<sequence length="1038" mass="119727">MYNKIETSGNFVNMEEKIAKLWKDKDVIQKSFDRNEDGEYFTFYDGPPTANGKPHVGHVLTRVMKDLIPRYKVMKGYKVLRKAGWDTHGLPVELEIEKKLGISGKPQIEEYGVEKFVKECKDSVFKYTSLWKDMSEKLGFWVDMDNPYVTYHNTYIESVWWALKTMWEKDLLYKGHRVTPYCPRCGTALSSHEVAQGYKDVKEATAFVKFKVKGEENKYILAWTTTPWTLPSNVALAINKAYDYVEVEQNGEHLILAKDLAEKVLEGEYKVVKEFKGEELVGTEYEQLFKFEVPDKKAFYVVHADYVTLTDGTGIVHTAPAYGEDDNMTGKKYDLPLINLVDGEGKFVDSVTPWKGMFVKKADPKILEFMKENGSLYKSEKFTHSYPHCWRCDTPLLYYPKDSWFVRMTSLRDKLLENNNKINWNPDNIRTGRFGKFLENVIDWGISRDRYWGTPLPIWECECGHRECIGSIEELKEKGINVPDDIELHKPYIDGVKLTCPHCGKEMTRTNEVIDCWFDSGSMPFAQHHYPFENKEVFEKTFPAQFISEAVDQTRGWFYSLLAISTALFDTNSYENCIVLGHVLDKHGLKMSKSKGNVVDPFDVLQNEGADATRWHFYTASAPWLPTRFSEDDVKETQRKFLSTLWNVYSFYVLYAELDQFNPLEYKDFVSENVMDKWILSKLNTLIKTVEEDLDNYKITEAALELEDFVDELSNWYVRRNRSRFWSTELTDDKIGAYKTLYTVLTTIVKVAAPFVPFMAEEIYQNLVVNLDKDAIESVHLCTWPEYDLSVVDNELEGQMDLAYKIVKLGRSARNGANIKNRQPLSEMLISTKSLPDYYGDIIKEELNIKKVEFGADLSKYVNFEIKPNLPVLGKAYGRYIPAIRKAISSMDQMELAQNINNGKSVFINVDGLDEQIELTENNLLVAMQGLEGFAFAGSSGVGVILETTITEELREEGFVREILSKVQNLRKESGFEVADKIKLYFAGNETLEVVIKKFEEHIKKETLAVLISYNEDREYVDSKINGEELKIAVEKQD</sequence>
<gene>
    <name evidence="1" type="primary">ileS</name>
    <name type="ordered locus">NT01CX_0646</name>
</gene>
<reference key="1">
    <citation type="journal article" date="2006" name="Nat. Biotechnol.">
        <title>The genome and transcriptomes of the anti-tumor agent Clostridium novyi-NT.</title>
        <authorList>
            <person name="Bettegowda C."/>
            <person name="Huang X."/>
            <person name="Lin J."/>
            <person name="Cheong I."/>
            <person name="Kohli M."/>
            <person name="Szabo S.A."/>
            <person name="Zhang X."/>
            <person name="Diaz L.A. Jr."/>
            <person name="Velculescu V.E."/>
            <person name="Parmigiani G."/>
            <person name="Kinzler K.W."/>
            <person name="Vogelstein B."/>
            <person name="Zhou S."/>
        </authorList>
    </citation>
    <scope>NUCLEOTIDE SEQUENCE [LARGE SCALE GENOMIC DNA]</scope>
    <source>
        <strain>NT</strain>
    </source>
</reference>
<keyword id="KW-0030">Aminoacyl-tRNA synthetase</keyword>
<keyword id="KW-0067">ATP-binding</keyword>
<keyword id="KW-0963">Cytoplasm</keyword>
<keyword id="KW-0436">Ligase</keyword>
<keyword id="KW-0479">Metal-binding</keyword>
<keyword id="KW-0547">Nucleotide-binding</keyword>
<keyword id="KW-0648">Protein biosynthesis</keyword>
<keyword id="KW-1185">Reference proteome</keyword>
<keyword id="KW-0862">Zinc</keyword>
<protein>
    <recommendedName>
        <fullName evidence="1">Isoleucine--tRNA ligase</fullName>
        <ecNumber evidence="1">6.1.1.5</ecNumber>
    </recommendedName>
    <alternativeName>
        <fullName evidence="1">Isoleucyl-tRNA synthetase</fullName>
        <shortName evidence="1">IleRS</shortName>
    </alternativeName>
</protein>